<sequence>MPNSERHGGKKDGSGGASGTSQPSSGGGSSNSRERHRLVSKHKRHKSKHSKDMGLVTPEAASLGTIIKPLVEYDDISSDSDTFSDDMAFKSDRRENDERRGTDRSDRLHRHRHHQHRRSRDLLKTKQTEKEKNQEVSKSGSMKDRLSGSSKRSVEGNDDYGKAQLSKSSSKESRSSKMHKEKTRKERELKSGHKDRSKSHRKRETPKSYKTVDSPKRRSRSPHRKWSDSSKQDDSPSGASYGQDYDLSPPRSHTSSNYDSYKKSPGSTSRRQSISPPYKEPSAYQSSTRSPSPYSRRQRSVSPYSRRRSSSYERSGSYSGRSPSPYGRRRSSSPFLSKRSLSRSPISSRKSMKSRSRSPAYSRHSSSHSKKKRSGSRSRHSSISPVRLPLNSSLGAELSRKKKERAAAAAAAKLDGKESKGSPIILPKKEKFEVKESGLESKKLPRGIKSEKSTPDTELVNVAHSNTEVKNCLDTGKVKLDENLQKHPVKDLKAQGTKDTKPVALKEVIVTSKETETSEKEALPPLPTITSPPPLPSTTPPPQTPPLPPLPPLPAVPLQPPLPPPQPPFSQVPVSNTSTLPSSPHPRTSTLSSQTNSQPLVQVSMKTQLSVTAAIPHLKTSTLPPLPLPPLLPGDDDMDSPKEMLPSKPAKKEKEQRTRHLLTDLPLPPELPGGDPSPPDSPEPKAITPPQQPYKKRPKICCPRYGERRQTESDWGKRCVDKFDIIGIIGEGTYGQVYKAKDKDTGELVALKKVRLDNEKEGFPITAIREIKILRQLVHQSVVNMKEIVTDKQDALDFKKDKGAFYLVFEYMDHDLMGLLESGLVHFSEDHIKSFMKQLMEGLDYCHKKNFLHRDIKCSNILLNNSGQIKLADFGLARLYNSEESRPYTNKVITLWYRPPELLLGEERYTPAIDVWSCGCILGELFTKKPIFQANLELAQLELISRLCGSPCPAVWPDVIKLPYFNTMKPKKQYRRRLREEFSFIPSAALDLLDHMLTLDPSKRCTAEQTLQSDFLKDVELSKMAPPDLPHWQDCHELWSKKRRRQRQSGIVIEEQPPSKASRKETTSGTAAEPVKNSSPAPPQPAPVKAEPGPGDAVGLGDITQQLNQSELAVLLNLLQSQTDLSIPQMAQLLNIHSNPEMQQQLEALNQSISALTEASSQQQDSESIAPEESLKEVPSVSVVLPPAEQTTPEASNTPADMQNMLAVLLSQLMKTQEPAGNLEENTSDKNSGPQGPRRTPTMPQEEAAACPPHILPPEKRPPEPPGPPPPPPPPPLVEGDLSSAPQELNPAVTAALLQLLSQPEAEPPGHLPHEHQALRPMEYSTRSHPNRTYGNTDGPETGFSATDTDERSSGPALTESLVQTLVKNRTFSGSVSHLGESNSYQGTGSVQFPGDQDLRFTRVPLALHSVVGQPFLKSEGNSNSVVHAETKLQNYGELGPGTTGANSSGTTLQWGGPAQSFGKPYRGAARVPPRGGRGRGVPY</sequence>
<proteinExistence type="evidence at protein level"/>
<feature type="chain" id="PRO_0000314471" description="Cyclin-dependent kinase 12">
    <location>
        <begin position="1"/>
        <end position="1484"/>
    </location>
</feature>
<feature type="domain" description="Protein kinase" evidence="4">
    <location>
        <begin position="723"/>
        <end position="1016"/>
    </location>
</feature>
<feature type="region of interest" description="Disordered" evidence="6">
    <location>
        <begin position="1"/>
        <end position="462"/>
    </location>
</feature>
<feature type="region of interest" description="Disordered" evidence="6">
    <location>
        <begin position="485"/>
        <end position="603"/>
    </location>
</feature>
<feature type="region of interest" description="Disordered" evidence="6">
    <location>
        <begin position="616"/>
        <end position="699"/>
    </location>
</feature>
<feature type="region of interest" description="Disordered" evidence="6">
    <location>
        <begin position="1046"/>
        <end position="1101"/>
    </location>
</feature>
<feature type="region of interest" description="Disordered" evidence="6">
    <location>
        <begin position="1156"/>
        <end position="1199"/>
    </location>
</feature>
<feature type="region of interest" description="Disordered" evidence="6">
    <location>
        <begin position="1218"/>
        <end position="1356"/>
    </location>
</feature>
<feature type="region of interest" description="Disordered" evidence="6">
    <location>
        <begin position="1437"/>
        <end position="1484"/>
    </location>
</feature>
<feature type="compositionally biased region" description="Basic and acidic residues" evidence="6">
    <location>
        <begin position="1"/>
        <end position="13"/>
    </location>
</feature>
<feature type="compositionally biased region" description="Basic residues" evidence="6">
    <location>
        <begin position="34"/>
        <end position="49"/>
    </location>
</feature>
<feature type="compositionally biased region" description="Acidic residues" evidence="6">
    <location>
        <begin position="72"/>
        <end position="84"/>
    </location>
</feature>
<feature type="compositionally biased region" description="Basic and acidic residues" evidence="6">
    <location>
        <begin position="87"/>
        <end position="106"/>
    </location>
</feature>
<feature type="compositionally biased region" description="Basic residues" evidence="6">
    <location>
        <begin position="107"/>
        <end position="119"/>
    </location>
</feature>
<feature type="compositionally biased region" description="Basic and acidic residues" evidence="6">
    <location>
        <begin position="120"/>
        <end position="161"/>
    </location>
</feature>
<feature type="compositionally biased region" description="Basic and acidic residues" evidence="6">
    <location>
        <begin position="183"/>
        <end position="194"/>
    </location>
</feature>
<feature type="compositionally biased region" description="Basic residues" evidence="6">
    <location>
        <begin position="195"/>
        <end position="204"/>
    </location>
</feature>
<feature type="compositionally biased region" description="Basic and acidic residues" evidence="6">
    <location>
        <begin position="225"/>
        <end position="234"/>
    </location>
</feature>
<feature type="compositionally biased region" description="Polar residues" evidence="6">
    <location>
        <begin position="251"/>
        <end position="275"/>
    </location>
</feature>
<feature type="compositionally biased region" description="Low complexity" evidence="6">
    <location>
        <begin position="286"/>
        <end position="304"/>
    </location>
</feature>
<feature type="compositionally biased region" description="Low complexity" evidence="6">
    <location>
        <begin position="312"/>
        <end position="349"/>
    </location>
</feature>
<feature type="compositionally biased region" description="Basic residues" evidence="6">
    <location>
        <begin position="365"/>
        <end position="380"/>
    </location>
</feature>
<feature type="compositionally biased region" description="Basic and acidic residues" evidence="6">
    <location>
        <begin position="427"/>
        <end position="455"/>
    </location>
</feature>
<feature type="compositionally biased region" description="Basic and acidic residues" evidence="6">
    <location>
        <begin position="485"/>
        <end position="501"/>
    </location>
</feature>
<feature type="compositionally biased region" description="Basic and acidic residues" evidence="6">
    <location>
        <begin position="513"/>
        <end position="522"/>
    </location>
</feature>
<feature type="compositionally biased region" description="Pro residues" evidence="6">
    <location>
        <begin position="524"/>
        <end position="570"/>
    </location>
</feature>
<feature type="compositionally biased region" description="Polar residues" evidence="6">
    <location>
        <begin position="576"/>
        <end position="603"/>
    </location>
</feature>
<feature type="compositionally biased region" description="Basic and acidic residues" evidence="6">
    <location>
        <begin position="650"/>
        <end position="662"/>
    </location>
</feature>
<feature type="compositionally biased region" description="Pro residues" evidence="6">
    <location>
        <begin position="666"/>
        <end position="681"/>
    </location>
</feature>
<feature type="compositionally biased region" description="Polar residues" evidence="6">
    <location>
        <begin position="1156"/>
        <end position="1167"/>
    </location>
</feature>
<feature type="compositionally biased region" description="Polar residues" evidence="6">
    <location>
        <begin position="1189"/>
        <end position="1199"/>
    </location>
</feature>
<feature type="compositionally biased region" description="Pro residues" evidence="6">
    <location>
        <begin position="1264"/>
        <end position="1277"/>
    </location>
</feature>
<feature type="compositionally biased region" description="Polar residues" evidence="6">
    <location>
        <begin position="1325"/>
        <end position="1336"/>
    </location>
</feature>
<feature type="compositionally biased region" description="Polar residues" evidence="6">
    <location>
        <begin position="1444"/>
        <end position="1454"/>
    </location>
</feature>
<feature type="compositionally biased region" description="Low complexity" evidence="6">
    <location>
        <begin position="1465"/>
        <end position="1484"/>
    </location>
</feature>
<feature type="active site" description="Proton acceptor" evidence="4 5">
    <location>
        <position position="855"/>
    </location>
</feature>
<feature type="binding site" evidence="4">
    <location>
        <begin position="729"/>
        <end position="737"/>
    </location>
    <ligand>
        <name>ATP</name>
        <dbReference type="ChEBI" id="CHEBI:30616"/>
    </ligand>
</feature>
<feature type="binding site" evidence="4">
    <location>
        <position position="752"/>
    </location>
    <ligand>
        <name>ATP</name>
        <dbReference type="ChEBI" id="CHEBI:30616"/>
    </ligand>
</feature>
<feature type="binding site" evidence="4">
    <location>
        <begin position="810"/>
        <end position="815"/>
    </location>
    <ligand>
        <name>ATP</name>
        <dbReference type="ChEBI" id="CHEBI:30616"/>
    </ligand>
</feature>
<feature type="binding site" evidence="4">
    <location>
        <position position="1036"/>
    </location>
    <ligand>
        <name>ATP</name>
        <dbReference type="ChEBI" id="CHEBI:30616"/>
    </ligand>
</feature>
<feature type="modified residue" description="Phosphothreonine" evidence="3">
    <location>
        <position position="57"/>
    </location>
</feature>
<feature type="modified residue" description="Phosphotyrosine" evidence="3">
    <location>
        <position position="73"/>
    </location>
</feature>
<feature type="modified residue" description="Phosphoserine" evidence="3">
    <location>
        <position position="235"/>
    </location>
</feature>
<feature type="modified residue" description="Phosphoserine" evidence="3">
    <location>
        <position position="248"/>
    </location>
</feature>
<feature type="modified residue" description="Phosphoserine" evidence="3">
    <location>
        <position position="264"/>
    </location>
</feature>
<feature type="modified residue" description="Phosphoserine" evidence="3">
    <location>
        <position position="273"/>
    </location>
</feature>
<feature type="modified residue" description="Phosphoserine" evidence="3">
    <location>
        <position position="275"/>
    </location>
</feature>
<feature type="modified residue" description="Phosphoserine" evidence="3">
    <location>
        <position position="300"/>
    </location>
</feature>
<feature type="modified residue" description="Phosphoserine" evidence="3">
    <location>
        <position position="302"/>
    </location>
</feature>
<feature type="modified residue" description="Phosphoserine" evidence="3">
    <location>
        <position position="309"/>
    </location>
</feature>
<feature type="modified residue" description="Phosphoserine" evidence="3">
    <location>
        <position position="311"/>
    </location>
</feature>
<feature type="modified residue" description="Phosphoserine" evidence="3">
    <location>
        <position position="317"/>
    </location>
</feature>
<feature type="modified residue" description="Phosphoserine" evidence="10">
    <location>
        <position position="322"/>
    </location>
</feature>
<feature type="modified residue" description="Phosphoserine" evidence="10">
    <location>
        <position position="324"/>
    </location>
</feature>
<feature type="modified residue" description="Phosphoserine" evidence="10">
    <location>
        <position position="331"/>
    </location>
</feature>
<feature type="modified residue" description="Phosphoserine" evidence="3">
    <location>
        <position position="332"/>
    </location>
</feature>
<feature type="modified residue" description="Phosphoserine" evidence="10">
    <location>
        <position position="333"/>
    </location>
</feature>
<feature type="modified residue" description="Phosphoserine" evidence="3">
    <location>
        <position position="337"/>
    </location>
</feature>
<feature type="modified residue" description="Phosphoserine" evidence="3">
    <location>
        <position position="340"/>
    </location>
</feature>
<feature type="modified residue" description="Phosphoserine" evidence="3">
    <location>
        <position position="342"/>
    </location>
</feature>
<feature type="modified residue" description="Phosphoserine" evidence="3">
    <location>
        <position position="344"/>
    </location>
</feature>
<feature type="modified residue" description="Phosphoserine" evidence="10">
    <location>
        <position position="382"/>
    </location>
</feature>
<feature type="modified residue" description="Phosphoserine" evidence="10">
    <location>
        <position position="384"/>
    </location>
</feature>
<feature type="modified residue" description="Phosphoserine" evidence="3">
    <location>
        <position position="399"/>
    </location>
</feature>
<feature type="modified residue" description="Phosphoserine" evidence="3">
    <location>
        <position position="419"/>
    </location>
</feature>
<feature type="modified residue" description="Phosphoserine" evidence="10">
    <location>
        <position position="422"/>
    </location>
</feature>
<feature type="modified residue" description="Phosphothreonine" evidence="3">
    <location>
        <position position="511"/>
    </location>
</feature>
<feature type="modified residue" description="Phosphoserine" evidence="3">
    <location>
        <position position="610"/>
    </location>
</feature>
<feature type="modified residue" description="Phosphoserine" evidence="10">
    <location>
        <position position="640"/>
    </location>
</feature>
<feature type="modified residue" description="Phosphoserine" evidence="10">
    <location>
        <position position="677"/>
    </location>
</feature>
<feature type="modified residue" description="Phosphoserine" evidence="10">
    <location>
        <position position="681"/>
    </location>
</feature>
<feature type="modified residue" description="Phosphothreonine" evidence="3">
    <location>
        <position position="688"/>
    </location>
</feature>
<feature type="modified residue" description="Phosphoserine" evidence="3">
    <location>
        <position position="885"/>
    </location>
</feature>
<feature type="modified residue" description="Phosphothreonine" evidence="10">
    <location>
        <position position="889"/>
    </location>
</feature>
<feature type="modified residue" description="Phosphoserine" evidence="3">
    <location>
        <position position="1049"/>
    </location>
</feature>
<feature type="modified residue" description="Phosphoserine" evidence="3">
    <location>
        <position position="1079"/>
    </location>
</feature>
<feature type="modified residue" description="Phosphothreonine" evidence="3">
    <location>
        <position position="1240"/>
    </location>
</feature>
<feature type="modified residue" description="Phosphothreonine" evidence="2">
    <location>
        <position position="1242"/>
    </location>
</feature>
<feature type="cross-link" description="Glycyl lysine isopeptide (Lys-Gly) (interchain with G-Cter in SUMO2)" evidence="3">
    <location>
        <position position="262"/>
    </location>
</feature>
<feature type="cross-link" description="Glycyl lysine isopeptide (Lys-Gly) (interchain with G-Cter in SUMO2)" evidence="3">
    <location>
        <position position="506"/>
    </location>
</feature>
<feature type="cross-link" description="Glycyl lysine isopeptide (Lys-Gly) (interchain with G-Cter in SUMO2)" evidence="3">
    <location>
        <position position="651"/>
    </location>
</feature>
<feature type="splice variant" id="VSP_030288" description="In isoform 2." evidence="8">
    <original>ACPPHILPP</original>
    <variation>GKQTGHESQ</variation>
    <location>
        <begin position="1250"/>
        <end position="1258"/>
    </location>
</feature>
<feature type="splice variant" id="VSP_030289" description="In isoform 2." evidence="8">
    <location>
        <begin position="1259"/>
        <end position="1484"/>
    </location>
</feature>
<reference key="1">
    <citation type="journal article" date="2006" name="Mol. Cell. Biol.">
        <title>Identification and characterization of the CDK12/cyclin L1 complex involved in alternative splicing regulation.</title>
        <authorList>
            <person name="Chen H.-H."/>
            <person name="Wang Y.-C."/>
            <person name="Fann M.-J."/>
        </authorList>
    </citation>
    <scope>NUCLEOTIDE SEQUENCE [MRNA] (ISOFORMS 1 AND 2)</scope>
    <scope>INTERACTION WITH CCNL1 AND CCNL2</scope>
    <scope>SUBCELLULAR LOCATION</scope>
    <scope>FUNCTION</scope>
    <scope>DEVELOPMENTAL STAGE</scope>
    <scope>TISSUE SPECIFICITY</scope>
    <source>
        <strain>Sprague-Dawley</strain>
    </source>
</reference>
<reference key="2">
    <citation type="journal article" date="2012" name="Nat. Commun.">
        <title>Quantitative maps of protein phosphorylation sites across 14 different rat organs and tissues.</title>
        <authorList>
            <person name="Lundby A."/>
            <person name="Secher A."/>
            <person name="Lage K."/>
            <person name="Nordsborg N.B."/>
            <person name="Dmytriyev A."/>
            <person name="Lundby C."/>
            <person name="Olsen J.V."/>
        </authorList>
    </citation>
    <scope>PHOSPHORYLATION [LARGE SCALE ANALYSIS] AT SER-322; SER-324; SER-331; SER-333; SER-382; SER-384; SER-422; SER-640; SER-677; SER-681 AND THR-889</scope>
    <scope>IDENTIFICATION BY MASS SPECTROMETRY [LARGE SCALE ANALYSIS]</scope>
</reference>
<organism>
    <name type="scientific">Rattus norvegicus</name>
    <name type="common">Rat</name>
    <dbReference type="NCBI Taxonomy" id="10116"/>
    <lineage>
        <taxon>Eukaryota</taxon>
        <taxon>Metazoa</taxon>
        <taxon>Chordata</taxon>
        <taxon>Craniata</taxon>
        <taxon>Vertebrata</taxon>
        <taxon>Euteleostomi</taxon>
        <taxon>Mammalia</taxon>
        <taxon>Eutheria</taxon>
        <taxon>Euarchontoglires</taxon>
        <taxon>Glires</taxon>
        <taxon>Rodentia</taxon>
        <taxon>Myomorpha</taxon>
        <taxon>Muroidea</taxon>
        <taxon>Muridae</taxon>
        <taxon>Murinae</taxon>
        <taxon>Rattus</taxon>
    </lineage>
</organism>
<keyword id="KW-0025">Alternative splicing</keyword>
<keyword id="KW-0067">ATP-binding</keyword>
<keyword id="KW-1017">Isopeptide bond</keyword>
<keyword id="KW-0418">Kinase</keyword>
<keyword id="KW-0507">mRNA processing</keyword>
<keyword id="KW-0508">mRNA splicing</keyword>
<keyword id="KW-0547">Nucleotide-binding</keyword>
<keyword id="KW-0539">Nucleus</keyword>
<keyword id="KW-0597">Phosphoprotein</keyword>
<keyword id="KW-1185">Reference proteome</keyword>
<keyword id="KW-0723">Serine/threonine-protein kinase</keyword>
<keyword id="KW-0808">Transferase</keyword>
<keyword id="KW-0832">Ubl conjugation</keyword>
<accession>Q3MJK5</accession>
<accession>Q8R458</accession>
<name>CDK12_RAT</name>
<dbReference type="EC" id="2.7.11.22"/>
<dbReference type="EC" id="2.7.11.23"/>
<dbReference type="EMBL" id="AY072294">
    <property type="protein sequence ID" value="AAL69525.1"/>
    <property type="molecule type" value="mRNA"/>
</dbReference>
<dbReference type="EMBL" id="AY962568">
    <property type="protein sequence ID" value="AAY41734.1"/>
    <property type="molecule type" value="mRNA"/>
</dbReference>
<dbReference type="RefSeq" id="NP_001029039.1">
    <molecule id="Q3MJK5-1"/>
    <property type="nucleotide sequence ID" value="NM_001033867.2"/>
</dbReference>
<dbReference type="RefSeq" id="NP_620271.1">
    <molecule id="Q3MJK5-2"/>
    <property type="nucleotide sequence ID" value="NM_138916.2"/>
</dbReference>
<dbReference type="SMR" id="Q3MJK5"/>
<dbReference type="FunCoup" id="Q3MJK5">
    <property type="interactions" value="3420"/>
</dbReference>
<dbReference type="STRING" id="10116.ENSRNOP00000008256"/>
<dbReference type="iPTMnet" id="Q3MJK5"/>
<dbReference type="PhosphoSitePlus" id="Q3MJK5"/>
<dbReference type="PaxDb" id="10116-ENSRNOP00000008256"/>
<dbReference type="GeneID" id="192350"/>
<dbReference type="KEGG" id="rno:192350"/>
<dbReference type="UCSC" id="RGD:621111">
    <molecule id="Q3MJK5-1"/>
    <property type="organism name" value="rat"/>
</dbReference>
<dbReference type="AGR" id="RGD:621111"/>
<dbReference type="CTD" id="51755"/>
<dbReference type="RGD" id="621111">
    <property type="gene designation" value="Cdk12"/>
</dbReference>
<dbReference type="VEuPathDB" id="HostDB:ENSRNOG00000006000"/>
<dbReference type="eggNOG" id="KOG0600">
    <property type="taxonomic scope" value="Eukaryota"/>
</dbReference>
<dbReference type="InParanoid" id="Q3MJK5"/>
<dbReference type="OrthoDB" id="28397at2759"/>
<dbReference type="PhylomeDB" id="Q3MJK5"/>
<dbReference type="TreeFam" id="TF101060"/>
<dbReference type="Reactome" id="R-RNO-6796648">
    <property type="pathway name" value="TP53 Regulates Transcription of DNA Repair Genes"/>
</dbReference>
<dbReference type="PRO" id="PR:Q3MJK5"/>
<dbReference type="Proteomes" id="UP000002494">
    <property type="component" value="Chromosome 10"/>
</dbReference>
<dbReference type="Bgee" id="ENSRNOG00000006000">
    <property type="expression patterns" value="Expressed in spleen and 18 other cell types or tissues"/>
</dbReference>
<dbReference type="ExpressionAtlas" id="Q3MJK5">
    <property type="expression patterns" value="baseline and differential"/>
</dbReference>
<dbReference type="GO" id="GO:0002944">
    <property type="term" value="C:cyclin K-CDK12 complex"/>
    <property type="evidence" value="ECO:0000266"/>
    <property type="project" value="RGD"/>
</dbReference>
<dbReference type="GO" id="GO:0008024">
    <property type="term" value="C:cyclin/CDK positive transcription elongation factor complex"/>
    <property type="evidence" value="ECO:0000318"/>
    <property type="project" value="GO_Central"/>
</dbReference>
<dbReference type="GO" id="GO:0019908">
    <property type="term" value="C:nuclear cyclin-dependent protein kinase holoenzyme complex"/>
    <property type="evidence" value="ECO:0000314"/>
    <property type="project" value="UniProtKB"/>
</dbReference>
<dbReference type="GO" id="GO:0016607">
    <property type="term" value="C:nuclear speck"/>
    <property type="evidence" value="ECO:0000314"/>
    <property type="project" value="UniProtKB"/>
</dbReference>
<dbReference type="GO" id="GO:0005634">
    <property type="term" value="C:nucleus"/>
    <property type="evidence" value="ECO:0000318"/>
    <property type="project" value="GO_Central"/>
</dbReference>
<dbReference type="GO" id="GO:0005524">
    <property type="term" value="F:ATP binding"/>
    <property type="evidence" value="ECO:0007669"/>
    <property type="project" value="UniProtKB-KW"/>
</dbReference>
<dbReference type="GO" id="GO:0030332">
    <property type="term" value="F:cyclin binding"/>
    <property type="evidence" value="ECO:0000314"/>
    <property type="project" value="RGD"/>
</dbReference>
<dbReference type="GO" id="GO:0004693">
    <property type="term" value="F:cyclin-dependent protein serine/threonine kinase activity"/>
    <property type="evidence" value="ECO:0007669"/>
    <property type="project" value="UniProtKB-EC"/>
</dbReference>
<dbReference type="GO" id="GO:0004672">
    <property type="term" value="F:protein kinase activity"/>
    <property type="evidence" value="ECO:0000266"/>
    <property type="project" value="RGD"/>
</dbReference>
<dbReference type="GO" id="GO:0019901">
    <property type="term" value="F:protein kinase binding"/>
    <property type="evidence" value="ECO:0000266"/>
    <property type="project" value="RGD"/>
</dbReference>
<dbReference type="GO" id="GO:0106310">
    <property type="term" value="F:protein serine kinase activity"/>
    <property type="evidence" value="ECO:0007669"/>
    <property type="project" value="RHEA"/>
</dbReference>
<dbReference type="GO" id="GO:0008353">
    <property type="term" value="F:RNA polymerase II CTD heptapeptide repeat kinase activity"/>
    <property type="evidence" value="ECO:0000250"/>
    <property type="project" value="UniProtKB"/>
</dbReference>
<dbReference type="GO" id="GO:0006397">
    <property type="term" value="P:mRNA processing"/>
    <property type="evidence" value="ECO:0007669"/>
    <property type="project" value="UniProtKB-KW"/>
</dbReference>
<dbReference type="GO" id="GO:2000737">
    <property type="term" value="P:negative regulation of stem cell differentiation"/>
    <property type="evidence" value="ECO:0000266"/>
    <property type="project" value="RGD"/>
</dbReference>
<dbReference type="GO" id="GO:0045944">
    <property type="term" value="P:positive regulation of transcription by RNA polymerase II"/>
    <property type="evidence" value="ECO:0000250"/>
    <property type="project" value="UniProtKB"/>
</dbReference>
<dbReference type="GO" id="GO:0032968">
    <property type="term" value="P:positive regulation of transcription elongation by RNA polymerase II"/>
    <property type="evidence" value="ECO:0000266"/>
    <property type="project" value="RGD"/>
</dbReference>
<dbReference type="GO" id="GO:0043405">
    <property type="term" value="P:regulation of MAP kinase activity"/>
    <property type="evidence" value="ECO:0000250"/>
    <property type="project" value="UniProtKB"/>
</dbReference>
<dbReference type="GO" id="GO:0043484">
    <property type="term" value="P:regulation of RNA splicing"/>
    <property type="evidence" value="ECO:0000314"/>
    <property type="project" value="RGD"/>
</dbReference>
<dbReference type="GO" id="GO:0008380">
    <property type="term" value="P:RNA splicing"/>
    <property type="evidence" value="ECO:0000315"/>
    <property type="project" value="UniProtKB"/>
</dbReference>
<dbReference type="GO" id="GO:0006366">
    <property type="term" value="P:transcription by RNA polymerase II"/>
    <property type="evidence" value="ECO:0000266"/>
    <property type="project" value="RGD"/>
</dbReference>
<dbReference type="CDD" id="cd07864">
    <property type="entry name" value="STKc_CDK12"/>
    <property type="match status" value="1"/>
</dbReference>
<dbReference type="FunFam" id="1.10.510.10:FF:000102">
    <property type="entry name" value="cyclin-dependent kinase 12 isoform X1"/>
    <property type="match status" value="1"/>
</dbReference>
<dbReference type="FunFam" id="3.30.200.20:FF:000074">
    <property type="entry name" value="cyclin-dependent kinase 12 isoform X2"/>
    <property type="match status" value="1"/>
</dbReference>
<dbReference type="Gene3D" id="3.30.200.20">
    <property type="entry name" value="Phosphorylase Kinase, domain 1"/>
    <property type="match status" value="1"/>
</dbReference>
<dbReference type="Gene3D" id="1.10.510.10">
    <property type="entry name" value="Transferase(Phosphotransferase) domain 1"/>
    <property type="match status" value="1"/>
</dbReference>
<dbReference type="InterPro" id="IPR050108">
    <property type="entry name" value="CDK"/>
</dbReference>
<dbReference type="InterPro" id="IPR011009">
    <property type="entry name" value="Kinase-like_dom_sf"/>
</dbReference>
<dbReference type="InterPro" id="IPR000719">
    <property type="entry name" value="Prot_kinase_dom"/>
</dbReference>
<dbReference type="InterPro" id="IPR017441">
    <property type="entry name" value="Protein_kinase_ATP_BS"/>
</dbReference>
<dbReference type="InterPro" id="IPR008271">
    <property type="entry name" value="Ser/Thr_kinase_AS"/>
</dbReference>
<dbReference type="PANTHER" id="PTHR24056">
    <property type="entry name" value="CELL DIVISION PROTEIN KINASE"/>
    <property type="match status" value="1"/>
</dbReference>
<dbReference type="PANTHER" id="PTHR24056:SF126">
    <property type="entry name" value="CYCLIN-DEPENDENT KINASE 12"/>
    <property type="match status" value="1"/>
</dbReference>
<dbReference type="Pfam" id="PF00069">
    <property type="entry name" value="Pkinase"/>
    <property type="match status" value="1"/>
</dbReference>
<dbReference type="SMART" id="SM00220">
    <property type="entry name" value="S_TKc"/>
    <property type="match status" value="1"/>
</dbReference>
<dbReference type="SUPFAM" id="SSF56112">
    <property type="entry name" value="Protein kinase-like (PK-like)"/>
    <property type="match status" value="1"/>
</dbReference>
<dbReference type="PROSITE" id="PS00107">
    <property type="entry name" value="PROTEIN_KINASE_ATP"/>
    <property type="match status" value="1"/>
</dbReference>
<dbReference type="PROSITE" id="PS50011">
    <property type="entry name" value="PROTEIN_KINASE_DOM"/>
    <property type="match status" value="1"/>
</dbReference>
<dbReference type="PROSITE" id="PS00108">
    <property type="entry name" value="PROTEIN_KINASE_ST"/>
    <property type="match status" value="1"/>
</dbReference>
<evidence type="ECO:0000250" key="1"/>
<evidence type="ECO:0000250" key="2">
    <source>
        <dbReference type="UniProtKB" id="Q14AX6"/>
    </source>
</evidence>
<evidence type="ECO:0000250" key="3">
    <source>
        <dbReference type="UniProtKB" id="Q9NYV4"/>
    </source>
</evidence>
<evidence type="ECO:0000255" key="4">
    <source>
        <dbReference type="PROSITE-ProRule" id="PRU00159"/>
    </source>
</evidence>
<evidence type="ECO:0000255" key="5">
    <source>
        <dbReference type="PROSITE-ProRule" id="PRU10027"/>
    </source>
</evidence>
<evidence type="ECO:0000256" key="6">
    <source>
        <dbReference type="SAM" id="MobiDB-lite"/>
    </source>
</evidence>
<evidence type="ECO:0000269" key="7">
    <source>
    </source>
</evidence>
<evidence type="ECO:0000303" key="8">
    <source>
    </source>
</evidence>
<evidence type="ECO:0000305" key="9"/>
<evidence type="ECO:0007744" key="10">
    <source>
    </source>
</evidence>
<gene>
    <name type="primary">Cdk12</name>
    <name type="synonym">Crk7</name>
    <name type="synonym">Crkrs</name>
    <name type="synonym">Pksc</name>
</gene>
<protein>
    <recommendedName>
        <fullName>Cyclin-dependent kinase 12</fullName>
        <ecNumber>2.7.11.22</ecNumber>
        <ecNumber>2.7.11.23</ecNumber>
    </recommendedName>
    <alternativeName>
        <fullName>Cdc2-related kinase, arginine/serine-rich</fullName>
        <shortName>CrkRS</shortName>
    </alternativeName>
    <alternativeName>
        <fullName>Cell division cycle 2-related protein kinase 7</fullName>
        <shortName>CDC2-related protein kinase 7</shortName>
    </alternativeName>
    <alternativeName>
        <fullName>Cell division protein kinase 12</fullName>
    </alternativeName>
    <alternativeName>
        <fullName>Protein kinase for splicing component</fullName>
    </alternativeName>
</protein>
<comment type="function">
    <text evidence="1 7">Cyclin-dependent kinase that phosphorylates the C-terminal domain (CTD) of the large subunit of RNA polymerase II (POLR2A), thereby acting as a key regulator of transcription elongation. Regulates the expression of genes involved in DNA repair and is required for the maintenance of genomic stability. Preferentially phosphorylates 'Ser-5' in CTD repeats that are already phosphorylated at 'Ser-7', but can also phosphorylate 'Ser-2'. Involved in regulation of MAP kinase activity, possibly leading to affect the response to estrogen inhibitors (By similarity). Required for RNA splicing, possibly by phosphorylating SRSF1/SF2.</text>
</comment>
<comment type="catalytic activity">
    <reaction>
        <text>[DNA-directed RNA polymerase] + ATP = phospho-[DNA-directed RNA polymerase] + ADP + H(+)</text>
        <dbReference type="Rhea" id="RHEA:10216"/>
        <dbReference type="Rhea" id="RHEA-COMP:11321"/>
        <dbReference type="Rhea" id="RHEA-COMP:11322"/>
        <dbReference type="ChEBI" id="CHEBI:15378"/>
        <dbReference type="ChEBI" id="CHEBI:30616"/>
        <dbReference type="ChEBI" id="CHEBI:43176"/>
        <dbReference type="ChEBI" id="CHEBI:68546"/>
        <dbReference type="ChEBI" id="CHEBI:456216"/>
        <dbReference type="EC" id="2.7.11.23"/>
    </reaction>
</comment>
<comment type="catalytic activity">
    <reaction>
        <text>L-seryl-[protein] + ATP = O-phospho-L-seryl-[protein] + ADP + H(+)</text>
        <dbReference type="Rhea" id="RHEA:17989"/>
        <dbReference type="Rhea" id="RHEA-COMP:9863"/>
        <dbReference type="Rhea" id="RHEA-COMP:11604"/>
        <dbReference type="ChEBI" id="CHEBI:15378"/>
        <dbReference type="ChEBI" id="CHEBI:29999"/>
        <dbReference type="ChEBI" id="CHEBI:30616"/>
        <dbReference type="ChEBI" id="CHEBI:83421"/>
        <dbReference type="ChEBI" id="CHEBI:456216"/>
        <dbReference type="EC" id="2.7.11.22"/>
    </reaction>
</comment>
<comment type="catalytic activity">
    <reaction>
        <text>L-threonyl-[protein] + ATP = O-phospho-L-threonyl-[protein] + ADP + H(+)</text>
        <dbReference type="Rhea" id="RHEA:46608"/>
        <dbReference type="Rhea" id="RHEA-COMP:11060"/>
        <dbReference type="Rhea" id="RHEA-COMP:11605"/>
        <dbReference type="ChEBI" id="CHEBI:15378"/>
        <dbReference type="ChEBI" id="CHEBI:30013"/>
        <dbReference type="ChEBI" id="CHEBI:30616"/>
        <dbReference type="ChEBI" id="CHEBI:61977"/>
        <dbReference type="ChEBI" id="CHEBI:456216"/>
        <dbReference type="EC" id="2.7.11.22"/>
    </reaction>
</comment>
<comment type="subunit">
    <text evidence="7">Interacts with CCNL1 and CCNL2.</text>
</comment>
<comment type="subcellular location">
    <subcellularLocation>
        <location evidence="7">Nucleus</location>
    </subcellularLocation>
    <subcellularLocation>
        <location evidence="7">Nucleus speckle</location>
    </subcellularLocation>
    <text>Colocalized with nuclear speckles throughout interphase.</text>
</comment>
<comment type="alternative products">
    <event type="alternative splicing"/>
    <isoform>
        <id>Q3MJK5-1</id>
        <name>1</name>
        <name>CDK12(L)</name>
        <sequence type="displayed"/>
    </isoform>
    <isoform>
        <id>Q3MJK5-2</id>
        <name>2</name>
        <name>CDK12(S)</name>
        <sequence type="described" ref="VSP_030288 VSP_030289"/>
    </isoform>
</comment>
<comment type="tissue specificity">
    <text evidence="7">Expressed in embryonic tissues such as brain, spinal cord, heart, lung, liver, gut and limb. Levels are lower in adult tissues.</text>
</comment>
<comment type="developmental stage">
    <text evidence="7">Expressed at 10.5 and 14.5 dpc.</text>
</comment>
<comment type="PTM">
    <text evidence="1">Phosphorylation at Thr-889 increases kinase activity.</text>
</comment>
<comment type="similarity">
    <text evidence="9">Belongs to the protein kinase superfamily. CMGC Ser/Thr protein kinase family. CDC2/CDKX subfamily.</text>
</comment>